<gene>
    <name type="primary">IL2</name>
</gene>
<keyword id="KW-1064">Adaptive immunity</keyword>
<keyword id="KW-0202">Cytokine</keyword>
<keyword id="KW-1015">Disulfide bond</keyword>
<keyword id="KW-0325">Glycoprotein</keyword>
<keyword id="KW-0339">Growth factor</keyword>
<keyword id="KW-0391">Immunity</keyword>
<keyword id="KW-0964">Secreted</keyword>
<keyword id="KW-0732">Signal</keyword>
<proteinExistence type="evidence at transcript level"/>
<sequence>MYKLQLLSCIALTLALVANSAPTLSSTKDTKKQLEPLLLDLQFLLKEVNNYENLKLSRMLTFKFYMPKKATELKHLQCLMEELKPLEEVLNLAQSKNSHLTNIKDSMNNINLTVSELKGSETGFTCEYDDETVTVVEFLNKWITFCQSIYSTMT</sequence>
<organism>
    <name type="scientific">Lama glama</name>
    <name type="common">Llama</name>
    <dbReference type="NCBI Taxonomy" id="9844"/>
    <lineage>
        <taxon>Eukaryota</taxon>
        <taxon>Metazoa</taxon>
        <taxon>Chordata</taxon>
        <taxon>Craniata</taxon>
        <taxon>Vertebrata</taxon>
        <taxon>Euteleostomi</taxon>
        <taxon>Mammalia</taxon>
        <taxon>Eutheria</taxon>
        <taxon>Laurasiatheria</taxon>
        <taxon>Artiodactyla</taxon>
        <taxon>Tylopoda</taxon>
        <taxon>Camelidae</taxon>
        <taxon>Lama</taxon>
    </lineage>
</organism>
<name>IL2_LAMGL</name>
<evidence type="ECO:0000250" key="1"/>
<evidence type="ECO:0000250" key="2">
    <source>
        <dbReference type="UniProtKB" id="P60568"/>
    </source>
</evidence>
<evidence type="ECO:0000305" key="3"/>
<dbReference type="EMBL" id="AB107651">
    <property type="protein sequence ID" value="BAC75388.1"/>
    <property type="molecule type" value="mRNA"/>
</dbReference>
<dbReference type="SMR" id="Q865X2"/>
<dbReference type="GlyCosmos" id="Q865X2">
    <property type="glycosylation" value="1 site, No reported glycans"/>
</dbReference>
<dbReference type="GO" id="GO:0005615">
    <property type="term" value="C:extracellular space"/>
    <property type="evidence" value="ECO:0007669"/>
    <property type="project" value="UniProtKB-KW"/>
</dbReference>
<dbReference type="GO" id="GO:0005125">
    <property type="term" value="F:cytokine activity"/>
    <property type="evidence" value="ECO:0007669"/>
    <property type="project" value="UniProtKB-KW"/>
</dbReference>
<dbReference type="GO" id="GO:0008083">
    <property type="term" value="F:growth factor activity"/>
    <property type="evidence" value="ECO:0007669"/>
    <property type="project" value="UniProtKB-KW"/>
</dbReference>
<dbReference type="GO" id="GO:0005134">
    <property type="term" value="F:interleukin-2 receptor binding"/>
    <property type="evidence" value="ECO:0007669"/>
    <property type="project" value="InterPro"/>
</dbReference>
<dbReference type="GO" id="GO:0002250">
    <property type="term" value="P:adaptive immune response"/>
    <property type="evidence" value="ECO:0007669"/>
    <property type="project" value="UniProtKB-KW"/>
</dbReference>
<dbReference type="Gene3D" id="1.20.1250.10">
    <property type="match status" value="1"/>
</dbReference>
<dbReference type="InterPro" id="IPR009079">
    <property type="entry name" value="4_helix_cytokine-like_core"/>
</dbReference>
<dbReference type="InterPro" id="IPR000779">
    <property type="entry name" value="IL-2"/>
</dbReference>
<dbReference type="InterPro" id="IPR030477">
    <property type="entry name" value="IL-2_CS"/>
</dbReference>
<dbReference type="PANTHER" id="PTHR48487">
    <property type="entry name" value="INTERLEUKIN-2"/>
    <property type="match status" value="1"/>
</dbReference>
<dbReference type="PANTHER" id="PTHR48487:SF1">
    <property type="entry name" value="INTERLEUKIN-2"/>
    <property type="match status" value="1"/>
</dbReference>
<dbReference type="Pfam" id="PF00715">
    <property type="entry name" value="IL2"/>
    <property type="match status" value="1"/>
</dbReference>
<dbReference type="PRINTS" id="PR00265">
    <property type="entry name" value="INTERLEUKIN2"/>
</dbReference>
<dbReference type="SMART" id="SM00189">
    <property type="entry name" value="IL2"/>
    <property type="match status" value="1"/>
</dbReference>
<dbReference type="SUPFAM" id="SSF47266">
    <property type="entry name" value="4-helical cytokines"/>
    <property type="match status" value="1"/>
</dbReference>
<dbReference type="PROSITE" id="PS00424">
    <property type="entry name" value="INTERLEUKIN_2"/>
    <property type="match status" value="1"/>
</dbReference>
<feature type="signal peptide" evidence="1">
    <location>
        <begin position="1"/>
        <end position="20"/>
    </location>
</feature>
<feature type="chain" id="PRO_0000015486" description="Interleukin-2">
    <location>
        <begin position="21"/>
        <end position="154"/>
    </location>
</feature>
<feature type="glycosylation site" description="O-linked (GalNAc...) threonine" evidence="1">
    <location>
        <position position="23"/>
    </location>
</feature>
<feature type="disulfide bond" evidence="1">
    <location>
        <begin position="78"/>
        <end position="126"/>
    </location>
</feature>
<comment type="function">
    <text evidence="2">Cytokine produced by activated CD4-positive helper T-cells and to a lesser extend activated CD8-positive T-cells and natural killer (NK) cells that plays pivotal roles in the immune response and tolerance. Binds to a receptor complex composed of either the high-affinity trimeric IL-2R (IL2RA/CD25, IL2RB/CD122 and IL2RG/CD132) or the low-affinity dimeric IL-2R (IL2RB and IL2RG). Interaction with the receptor leads to oligomerization and conformation changes in the IL-2R subunits resulting in downstream signaling starting with phosphorylation of JAK1 and JAK3. In turn, JAK1 and JAK3 phosphorylate the receptor to form a docking site leading to the phosphorylation of several substrates including STAT5. This process leads to activation of several pathways including STAT, phosphoinositide-3-kinase/PI3K and mitogen-activated protein kinase/MAPK pathways. Functions as a T-cell growth factor and can increase NK-cell cytolytic activity as well. Promotes strong proliferation of activated B-cells and subsequently immunoglobulin production. Plays a pivotal role in regulating the adaptive immune system by controlling the survival and proliferation of regulatory T-cells, which are required for the maintenance of immune tolerance. Moreover, participates in the differentiation and homeostasis of effector T-cell subsets, including Th1, Th2, Th17 as well as memory CD8-positive T-cells.</text>
</comment>
<comment type="subcellular location">
    <subcellularLocation>
        <location>Secreted</location>
    </subcellularLocation>
</comment>
<comment type="similarity">
    <text evidence="3">Belongs to the IL-2 family.</text>
</comment>
<protein>
    <recommendedName>
        <fullName>Interleukin-2</fullName>
        <shortName>IL-2</shortName>
    </recommendedName>
    <alternativeName>
        <fullName>T-cell growth factor</fullName>
        <shortName>TCGF</shortName>
    </alternativeName>
</protein>
<reference key="1">
    <citation type="journal article" date="2004" name="Vet. Immunol. Immunopathol.">
        <title>Cloning and sequence analysis of llama cytokines related to cell-mediated immunity.</title>
        <authorList>
            <person name="Odbileg R."/>
            <person name="Lee S.-I."/>
            <person name="Yoshida R."/>
            <person name="Chang K.-S."/>
            <person name="Ohashi K."/>
            <person name="Sugimoto C."/>
            <person name="Onuma M."/>
        </authorList>
    </citation>
    <scope>NUCLEOTIDE SEQUENCE [MRNA]</scope>
</reference>
<accession>Q865X2</accession>